<proteinExistence type="inferred from homology"/>
<sequence length="385" mass="43825">MKALQFGAGNIGRGFIGKTLSESGFSVIFSDVNQNIVDAINYNREYFVKIIGSNQNKTVNIKRVSAINSNDSNIKKIISSVDLITTAVGPTALEKIALIITQGIIFKIKNQFTKPLNIIACENKIKSSSFLKQVVLKNLPIKYHDYLNKYIGFIDCSIDTIIPAINNKDDLFLTVEEFKEWIVNINQFKGAVPKIVDMKFSNNLDAFIERKLFTLNTGHAIAAYLGLIKNYKTIQDAISDKKIRVIVRSAMEESGSVLIKRYNFNKNDHLDYIEKIFLRFENPFLSDKLERIGRNPLQKLRREDRLIKPFLGAFEYNLPYSNLAKGIAAAFYYHNKNDLESIELSSSIKKQGLESTIIKICDLPVNSKEVYSIILEYNLIKKIIR</sequence>
<name>MTLD_BUCAI</name>
<comment type="catalytic activity">
    <reaction>
        <text>D-mannitol 1-phosphate + NAD(+) = beta-D-fructose 6-phosphate + NADH + H(+)</text>
        <dbReference type="Rhea" id="RHEA:19661"/>
        <dbReference type="ChEBI" id="CHEBI:15378"/>
        <dbReference type="ChEBI" id="CHEBI:57540"/>
        <dbReference type="ChEBI" id="CHEBI:57634"/>
        <dbReference type="ChEBI" id="CHEBI:57945"/>
        <dbReference type="ChEBI" id="CHEBI:61381"/>
        <dbReference type="EC" id="1.1.1.17"/>
    </reaction>
</comment>
<comment type="similarity">
    <text evidence="2">Belongs to the mannitol dehydrogenase family.</text>
</comment>
<accession>P57634</accession>
<organism>
    <name type="scientific">Buchnera aphidicola subsp. Acyrthosiphon pisum (strain APS)</name>
    <name type="common">Acyrthosiphon pisum symbiotic bacterium</name>
    <dbReference type="NCBI Taxonomy" id="107806"/>
    <lineage>
        <taxon>Bacteria</taxon>
        <taxon>Pseudomonadati</taxon>
        <taxon>Pseudomonadota</taxon>
        <taxon>Gammaproteobacteria</taxon>
        <taxon>Enterobacterales</taxon>
        <taxon>Erwiniaceae</taxon>
        <taxon>Buchnera</taxon>
    </lineage>
</organism>
<keyword id="KW-0520">NAD</keyword>
<keyword id="KW-0560">Oxidoreductase</keyword>
<keyword id="KW-1185">Reference proteome</keyword>
<gene>
    <name type="primary">mtlD</name>
    <name type="ordered locus">BU571</name>
</gene>
<feature type="chain" id="PRO_0000170699" description="Mannitol-1-phosphate 5-dehydrogenase">
    <location>
        <begin position="1"/>
        <end position="385"/>
    </location>
</feature>
<feature type="binding site" evidence="1">
    <location>
        <begin position="3"/>
        <end position="14"/>
    </location>
    <ligand>
        <name>NAD(+)</name>
        <dbReference type="ChEBI" id="CHEBI:57540"/>
    </ligand>
</feature>
<dbReference type="EC" id="1.1.1.17"/>
<dbReference type="EMBL" id="BA000003">
    <property type="protein sequence ID" value="BAB13261.1"/>
    <property type="molecule type" value="Genomic_DNA"/>
</dbReference>
<dbReference type="RefSeq" id="NP_240375.1">
    <property type="nucleotide sequence ID" value="NC_002528.1"/>
</dbReference>
<dbReference type="RefSeq" id="WP_010896168.1">
    <property type="nucleotide sequence ID" value="NC_002528.1"/>
</dbReference>
<dbReference type="SMR" id="P57634"/>
<dbReference type="STRING" id="563178.BUAP5A_564"/>
<dbReference type="EnsemblBacteria" id="BAB13261">
    <property type="protein sequence ID" value="BAB13261"/>
    <property type="gene ID" value="BAB13261"/>
</dbReference>
<dbReference type="KEGG" id="buc:BU571"/>
<dbReference type="PATRIC" id="fig|107806.10.peg.574"/>
<dbReference type="eggNOG" id="COG0246">
    <property type="taxonomic scope" value="Bacteria"/>
</dbReference>
<dbReference type="HOGENOM" id="CLU_036089_2_0_6"/>
<dbReference type="Proteomes" id="UP000001806">
    <property type="component" value="Chromosome"/>
</dbReference>
<dbReference type="GO" id="GO:0005829">
    <property type="term" value="C:cytosol"/>
    <property type="evidence" value="ECO:0007669"/>
    <property type="project" value="TreeGrafter"/>
</dbReference>
<dbReference type="GO" id="GO:0008926">
    <property type="term" value="F:mannitol-1-phosphate 5-dehydrogenase activity"/>
    <property type="evidence" value="ECO:0007669"/>
    <property type="project" value="UniProtKB-UniRule"/>
</dbReference>
<dbReference type="GO" id="GO:0019592">
    <property type="term" value="P:mannitol catabolic process"/>
    <property type="evidence" value="ECO:0007669"/>
    <property type="project" value="TreeGrafter"/>
</dbReference>
<dbReference type="Gene3D" id="1.10.1040.10">
    <property type="entry name" value="N-(1-d-carboxylethyl)-l-norvaline Dehydrogenase, domain 2"/>
    <property type="match status" value="1"/>
</dbReference>
<dbReference type="Gene3D" id="3.40.50.720">
    <property type="entry name" value="NAD(P)-binding Rossmann-like Domain"/>
    <property type="match status" value="1"/>
</dbReference>
<dbReference type="HAMAP" id="MF_00196">
    <property type="entry name" value="Mannitol_dehydrog"/>
    <property type="match status" value="1"/>
</dbReference>
<dbReference type="InterPro" id="IPR008927">
    <property type="entry name" value="6-PGluconate_DH-like_C_sf"/>
</dbReference>
<dbReference type="InterPro" id="IPR013328">
    <property type="entry name" value="6PGD_dom2"/>
</dbReference>
<dbReference type="InterPro" id="IPR023028">
    <property type="entry name" value="Mannitol_1_phos_5_DH"/>
</dbReference>
<dbReference type="InterPro" id="IPR000669">
    <property type="entry name" value="Mannitol_DH"/>
</dbReference>
<dbReference type="InterPro" id="IPR013118">
    <property type="entry name" value="Mannitol_DH_C"/>
</dbReference>
<dbReference type="InterPro" id="IPR013131">
    <property type="entry name" value="Mannitol_DH_N"/>
</dbReference>
<dbReference type="InterPro" id="IPR036291">
    <property type="entry name" value="NAD(P)-bd_dom_sf"/>
</dbReference>
<dbReference type="NCBIfam" id="NF002646">
    <property type="entry name" value="PRK02318.1-2"/>
    <property type="match status" value="1"/>
</dbReference>
<dbReference type="NCBIfam" id="NF002650">
    <property type="entry name" value="PRK02318.2-2"/>
    <property type="match status" value="1"/>
</dbReference>
<dbReference type="NCBIfam" id="NF002652">
    <property type="entry name" value="PRK02318.2-5"/>
    <property type="match status" value="1"/>
</dbReference>
<dbReference type="PANTHER" id="PTHR30524:SF0">
    <property type="entry name" value="ALTRONATE OXIDOREDUCTASE-RELATED"/>
    <property type="match status" value="1"/>
</dbReference>
<dbReference type="PANTHER" id="PTHR30524">
    <property type="entry name" value="MANNITOL-1-PHOSPHATE 5-DEHYDROGENASE"/>
    <property type="match status" value="1"/>
</dbReference>
<dbReference type="Pfam" id="PF01232">
    <property type="entry name" value="Mannitol_dh"/>
    <property type="match status" value="1"/>
</dbReference>
<dbReference type="Pfam" id="PF08125">
    <property type="entry name" value="Mannitol_dh_C"/>
    <property type="match status" value="1"/>
</dbReference>
<dbReference type="PRINTS" id="PR00084">
    <property type="entry name" value="MTLDHDRGNASE"/>
</dbReference>
<dbReference type="SUPFAM" id="SSF48179">
    <property type="entry name" value="6-phosphogluconate dehydrogenase C-terminal domain-like"/>
    <property type="match status" value="1"/>
</dbReference>
<dbReference type="SUPFAM" id="SSF51735">
    <property type="entry name" value="NAD(P)-binding Rossmann-fold domains"/>
    <property type="match status" value="1"/>
</dbReference>
<reference key="1">
    <citation type="journal article" date="2000" name="Nature">
        <title>Genome sequence of the endocellular bacterial symbiont of aphids Buchnera sp. APS.</title>
        <authorList>
            <person name="Shigenobu S."/>
            <person name="Watanabe H."/>
            <person name="Hattori M."/>
            <person name="Sakaki Y."/>
            <person name="Ishikawa H."/>
        </authorList>
    </citation>
    <scope>NUCLEOTIDE SEQUENCE [LARGE SCALE GENOMIC DNA]</scope>
    <source>
        <strain>APS</strain>
    </source>
</reference>
<protein>
    <recommendedName>
        <fullName>Mannitol-1-phosphate 5-dehydrogenase</fullName>
        <ecNumber>1.1.1.17</ecNumber>
    </recommendedName>
</protein>
<evidence type="ECO:0000250" key="1"/>
<evidence type="ECO:0000305" key="2"/>